<evidence type="ECO:0000255" key="1">
    <source>
        <dbReference type="HAMAP-Rule" id="MF_00374"/>
    </source>
</evidence>
<evidence type="ECO:0000305" key="2"/>
<keyword id="KW-1185">Reference proteome</keyword>
<keyword id="KW-0687">Ribonucleoprotein</keyword>
<keyword id="KW-0689">Ribosomal protein</keyword>
<gene>
    <name evidence="1" type="primary">rpmC</name>
    <name type="ordered locus">LEUM_0204</name>
</gene>
<proteinExistence type="inferred from homology"/>
<protein>
    <recommendedName>
        <fullName evidence="1">Large ribosomal subunit protein uL29</fullName>
    </recommendedName>
    <alternativeName>
        <fullName evidence="2">50S ribosomal protein L29</fullName>
    </alternativeName>
</protein>
<dbReference type="EMBL" id="CP000414">
    <property type="protein sequence ID" value="ABJ61335.1"/>
    <property type="molecule type" value="Genomic_DNA"/>
</dbReference>
<dbReference type="RefSeq" id="WP_002816028.1">
    <property type="nucleotide sequence ID" value="NC_008531.1"/>
</dbReference>
<dbReference type="SMR" id="Q03ZN7"/>
<dbReference type="EnsemblBacteria" id="ABJ61335">
    <property type="protein sequence ID" value="ABJ61335"/>
    <property type="gene ID" value="LEUM_0204"/>
</dbReference>
<dbReference type="GeneID" id="97504973"/>
<dbReference type="KEGG" id="lme:LEUM_0204"/>
<dbReference type="eggNOG" id="COG0255">
    <property type="taxonomic scope" value="Bacteria"/>
</dbReference>
<dbReference type="HOGENOM" id="CLU_158491_5_2_9"/>
<dbReference type="Proteomes" id="UP000000362">
    <property type="component" value="Chromosome"/>
</dbReference>
<dbReference type="GO" id="GO:0022625">
    <property type="term" value="C:cytosolic large ribosomal subunit"/>
    <property type="evidence" value="ECO:0007669"/>
    <property type="project" value="TreeGrafter"/>
</dbReference>
<dbReference type="GO" id="GO:0003735">
    <property type="term" value="F:structural constituent of ribosome"/>
    <property type="evidence" value="ECO:0007669"/>
    <property type="project" value="InterPro"/>
</dbReference>
<dbReference type="GO" id="GO:0006412">
    <property type="term" value="P:translation"/>
    <property type="evidence" value="ECO:0007669"/>
    <property type="project" value="UniProtKB-UniRule"/>
</dbReference>
<dbReference type="CDD" id="cd00427">
    <property type="entry name" value="Ribosomal_L29_HIP"/>
    <property type="match status" value="1"/>
</dbReference>
<dbReference type="FunFam" id="1.10.287.310:FF:000001">
    <property type="entry name" value="50S ribosomal protein L29"/>
    <property type="match status" value="1"/>
</dbReference>
<dbReference type="Gene3D" id="1.10.287.310">
    <property type="match status" value="1"/>
</dbReference>
<dbReference type="HAMAP" id="MF_00374">
    <property type="entry name" value="Ribosomal_uL29"/>
    <property type="match status" value="1"/>
</dbReference>
<dbReference type="InterPro" id="IPR050063">
    <property type="entry name" value="Ribosomal_protein_uL29"/>
</dbReference>
<dbReference type="InterPro" id="IPR001854">
    <property type="entry name" value="Ribosomal_uL29"/>
</dbReference>
<dbReference type="InterPro" id="IPR018254">
    <property type="entry name" value="Ribosomal_uL29_CS"/>
</dbReference>
<dbReference type="InterPro" id="IPR036049">
    <property type="entry name" value="Ribosomal_uL29_sf"/>
</dbReference>
<dbReference type="NCBIfam" id="TIGR00012">
    <property type="entry name" value="L29"/>
    <property type="match status" value="1"/>
</dbReference>
<dbReference type="PANTHER" id="PTHR10916">
    <property type="entry name" value="60S RIBOSOMAL PROTEIN L35/50S RIBOSOMAL PROTEIN L29"/>
    <property type="match status" value="1"/>
</dbReference>
<dbReference type="PANTHER" id="PTHR10916:SF0">
    <property type="entry name" value="LARGE RIBOSOMAL SUBUNIT PROTEIN UL29C"/>
    <property type="match status" value="1"/>
</dbReference>
<dbReference type="Pfam" id="PF00831">
    <property type="entry name" value="Ribosomal_L29"/>
    <property type="match status" value="1"/>
</dbReference>
<dbReference type="SUPFAM" id="SSF46561">
    <property type="entry name" value="Ribosomal protein L29 (L29p)"/>
    <property type="match status" value="1"/>
</dbReference>
<dbReference type="PROSITE" id="PS00579">
    <property type="entry name" value="RIBOSOMAL_L29"/>
    <property type="match status" value="1"/>
</dbReference>
<accession>Q03ZN7</accession>
<sequence length="68" mass="7757">MAKASELKELSLADLQKREAEFKEELFNLRFQLATGQLENTARIAQVRKDIARVKTVIRAQELANANK</sequence>
<name>RL29_LEUMM</name>
<feature type="chain" id="PRO_1000059970" description="Large ribosomal subunit protein uL29">
    <location>
        <begin position="1"/>
        <end position="68"/>
    </location>
</feature>
<comment type="similarity">
    <text evidence="1">Belongs to the universal ribosomal protein uL29 family.</text>
</comment>
<reference key="1">
    <citation type="journal article" date="2006" name="Proc. Natl. Acad. Sci. U.S.A.">
        <title>Comparative genomics of the lactic acid bacteria.</title>
        <authorList>
            <person name="Makarova K.S."/>
            <person name="Slesarev A."/>
            <person name="Wolf Y.I."/>
            <person name="Sorokin A."/>
            <person name="Mirkin B."/>
            <person name="Koonin E.V."/>
            <person name="Pavlov A."/>
            <person name="Pavlova N."/>
            <person name="Karamychev V."/>
            <person name="Polouchine N."/>
            <person name="Shakhova V."/>
            <person name="Grigoriev I."/>
            <person name="Lou Y."/>
            <person name="Rohksar D."/>
            <person name="Lucas S."/>
            <person name="Huang K."/>
            <person name="Goodstein D.M."/>
            <person name="Hawkins T."/>
            <person name="Plengvidhya V."/>
            <person name="Welker D."/>
            <person name="Hughes J."/>
            <person name="Goh Y."/>
            <person name="Benson A."/>
            <person name="Baldwin K."/>
            <person name="Lee J.-H."/>
            <person name="Diaz-Muniz I."/>
            <person name="Dosti B."/>
            <person name="Smeianov V."/>
            <person name="Wechter W."/>
            <person name="Barabote R."/>
            <person name="Lorca G."/>
            <person name="Altermann E."/>
            <person name="Barrangou R."/>
            <person name="Ganesan B."/>
            <person name="Xie Y."/>
            <person name="Rawsthorne H."/>
            <person name="Tamir D."/>
            <person name="Parker C."/>
            <person name="Breidt F."/>
            <person name="Broadbent J.R."/>
            <person name="Hutkins R."/>
            <person name="O'Sullivan D."/>
            <person name="Steele J."/>
            <person name="Unlu G."/>
            <person name="Saier M.H. Jr."/>
            <person name="Klaenhammer T."/>
            <person name="Richardson P."/>
            <person name="Kozyavkin S."/>
            <person name="Weimer B.C."/>
            <person name="Mills D.A."/>
        </authorList>
    </citation>
    <scope>NUCLEOTIDE SEQUENCE [LARGE SCALE GENOMIC DNA]</scope>
    <source>
        <strain>ATCC 8293 / DSM 20343 / BCRC 11652 / CCM 1803 / JCM 6124 / NCDO 523 / NBRC 100496 / NCIMB 8023 / NCTC 12954 / NRRL B-1118 / 37Y</strain>
    </source>
</reference>
<organism>
    <name type="scientific">Leuconostoc mesenteroides subsp. mesenteroides (strain ATCC 8293 / DSM 20343 / BCRC 11652 / CCM 1803 / JCM 6124 / NCDO 523 / NBRC 100496 / NCIMB 8023 / NCTC 12954 / NRRL B-1118 / 37Y)</name>
    <dbReference type="NCBI Taxonomy" id="203120"/>
    <lineage>
        <taxon>Bacteria</taxon>
        <taxon>Bacillati</taxon>
        <taxon>Bacillota</taxon>
        <taxon>Bacilli</taxon>
        <taxon>Lactobacillales</taxon>
        <taxon>Lactobacillaceae</taxon>
        <taxon>Leuconostoc</taxon>
    </lineage>
</organism>